<proteinExistence type="inferred from homology"/>
<reference key="1">
    <citation type="journal article" date="2009" name="Appl. Environ. Microbiol.">
        <title>Three genomes from the phylum Acidobacteria provide insight into the lifestyles of these microorganisms in soils.</title>
        <authorList>
            <person name="Ward N.L."/>
            <person name="Challacombe J.F."/>
            <person name="Janssen P.H."/>
            <person name="Henrissat B."/>
            <person name="Coutinho P.M."/>
            <person name="Wu M."/>
            <person name="Xie G."/>
            <person name="Haft D.H."/>
            <person name="Sait M."/>
            <person name="Badger J."/>
            <person name="Barabote R.D."/>
            <person name="Bradley B."/>
            <person name="Brettin T.S."/>
            <person name="Brinkac L.M."/>
            <person name="Bruce D."/>
            <person name="Creasy T."/>
            <person name="Daugherty S.C."/>
            <person name="Davidsen T.M."/>
            <person name="DeBoy R.T."/>
            <person name="Detter J.C."/>
            <person name="Dodson R.J."/>
            <person name="Durkin A.S."/>
            <person name="Ganapathy A."/>
            <person name="Gwinn-Giglio M."/>
            <person name="Han C.S."/>
            <person name="Khouri H."/>
            <person name="Kiss H."/>
            <person name="Kothari S.P."/>
            <person name="Madupu R."/>
            <person name="Nelson K.E."/>
            <person name="Nelson W.C."/>
            <person name="Paulsen I."/>
            <person name="Penn K."/>
            <person name="Ren Q."/>
            <person name="Rosovitz M.J."/>
            <person name="Selengut J.D."/>
            <person name="Shrivastava S."/>
            <person name="Sullivan S.A."/>
            <person name="Tapia R."/>
            <person name="Thompson L.S."/>
            <person name="Watkins K.L."/>
            <person name="Yang Q."/>
            <person name="Yu C."/>
            <person name="Zafar N."/>
            <person name="Zhou L."/>
            <person name="Kuske C.R."/>
        </authorList>
    </citation>
    <scope>NUCLEOTIDE SEQUENCE [LARGE SCALE GENOMIC DNA]</scope>
    <source>
        <strain>Ellin6076</strain>
    </source>
</reference>
<protein>
    <recommendedName>
        <fullName evidence="1">Small ribosomal subunit protein uS2</fullName>
    </recommendedName>
    <alternativeName>
        <fullName evidence="3">30S ribosomal protein S2</fullName>
    </alternativeName>
</protein>
<gene>
    <name evidence="1" type="primary">rpsB</name>
    <name type="ordered locus">Acid_0906</name>
</gene>
<sequence>MPAISMKELLEAGVHFGHQTKRWNPKMKEYIFGERNGIYIIDLQKTLKMFKDAARFVGEMAAQGKNVLFVGTKRQAQEAIAEEANRCQMYYVNQRWLGGLLTNMLTVQKSIKRLKELEAMASVEGGYAGRPKKEVIRLERERKHLDQNLSGIKDMPGLPDVLFVIDSNKEGIAVKEARRLGIPVVAIVDTNCDPDEVDWVIPGNDDALRAIRLFASKIADAVVEGRALATEQDFTADKIISDETPAEEGMMEYTEYVDPKYAEKIMAESLSMAEEPAPPSQRKGPASETAEPVAEPAVTESGS</sequence>
<feature type="chain" id="PRO_1000004077" description="Small ribosomal subunit protein uS2">
    <location>
        <begin position="1"/>
        <end position="303"/>
    </location>
</feature>
<feature type="region of interest" description="Disordered" evidence="2">
    <location>
        <begin position="267"/>
        <end position="303"/>
    </location>
</feature>
<organism>
    <name type="scientific">Solibacter usitatus (strain Ellin6076)</name>
    <dbReference type="NCBI Taxonomy" id="234267"/>
    <lineage>
        <taxon>Bacteria</taxon>
        <taxon>Pseudomonadati</taxon>
        <taxon>Acidobacteriota</taxon>
        <taxon>Terriglobia</taxon>
        <taxon>Bryobacterales</taxon>
        <taxon>Solibacteraceae</taxon>
        <taxon>Candidatus Solibacter</taxon>
    </lineage>
</organism>
<evidence type="ECO:0000255" key="1">
    <source>
        <dbReference type="HAMAP-Rule" id="MF_00291"/>
    </source>
</evidence>
<evidence type="ECO:0000256" key="2">
    <source>
        <dbReference type="SAM" id="MobiDB-lite"/>
    </source>
</evidence>
<evidence type="ECO:0000305" key="3"/>
<comment type="similarity">
    <text evidence="1">Belongs to the universal ribosomal protein uS2 family.</text>
</comment>
<keyword id="KW-0687">Ribonucleoprotein</keyword>
<keyword id="KW-0689">Ribosomal protein</keyword>
<name>RS2_SOLUE</name>
<dbReference type="EMBL" id="CP000473">
    <property type="protein sequence ID" value="ABJ81905.1"/>
    <property type="molecule type" value="Genomic_DNA"/>
</dbReference>
<dbReference type="SMR" id="Q02AL1"/>
<dbReference type="FunCoup" id="Q02AL1">
    <property type="interactions" value="816"/>
</dbReference>
<dbReference type="STRING" id="234267.Acid_0906"/>
<dbReference type="KEGG" id="sus:Acid_0906"/>
<dbReference type="eggNOG" id="COG0052">
    <property type="taxonomic scope" value="Bacteria"/>
</dbReference>
<dbReference type="HOGENOM" id="CLU_040318_2_2_0"/>
<dbReference type="InParanoid" id="Q02AL1"/>
<dbReference type="OrthoDB" id="9808036at2"/>
<dbReference type="GO" id="GO:0022627">
    <property type="term" value="C:cytosolic small ribosomal subunit"/>
    <property type="evidence" value="ECO:0007669"/>
    <property type="project" value="TreeGrafter"/>
</dbReference>
<dbReference type="GO" id="GO:0003735">
    <property type="term" value="F:structural constituent of ribosome"/>
    <property type="evidence" value="ECO:0007669"/>
    <property type="project" value="InterPro"/>
</dbReference>
<dbReference type="GO" id="GO:0006412">
    <property type="term" value="P:translation"/>
    <property type="evidence" value="ECO:0007669"/>
    <property type="project" value="UniProtKB-UniRule"/>
</dbReference>
<dbReference type="CDD" id="cd01425">
    <property type="entry name" value="RPS2"/>
    <property type="match status" value="1"/>
</dbReference>
<dbReference type="Gene3D" id="3.40.50.10490">
    <property type="entry name" value="Glucose-6-phosphate isomerase like protein, domain 1"/>
    <property type="match status" value="1"/>
</dbReference>
<dbReference type="Gene3D" id="1.10.287.610">
    <property type="entry name" value="Helix hairpin bin"/>
    <property type="match status" value="1"/>
</dbReference>
<dbReference type="HAMAP" id="MF_00291_B">
    <property type="entry name" value="Ribosomal_uS2_B"/>
    <property type="match status" value="1"/>
</dbReference>
<dbReference type="InterPro" id="IPR001865">
    <property type="entry name" value="Ribosomal_uS2"/>
</dbReference>
<dbReference type="InterPro" id="IPR005706">
    <property type="entry name" value="Ribosomal_uS2_bac/mit/plastid"/>
</dbReference>
<dbReference type="InterPro" id="IPR018130">
    <property type="entry name" value="Ribosomal_uS2_CS"/>
</dbReference>
<dbReference type="InterPro" id="IPR023591">
    <property type="entry name" value="Ribosomal_uS2_flav_dom_sf"/>
</dbReference>
<dbReference type="NCBIfam" id="TIGR01011">
    <property type="entry name" value="rpsB_bact"/>
    <property type="match status" value="1"/>
</dbReference>
<dbReference type="PANTHER" id="PTHR12534">
    <property type="entry name" value="30S RIBOSOMAL PROTEIN S2 PROKARYOTIC AND ORGANELLAR"/>
    <property type="match status" value="1"/>
</dbReference>
<dbReference type="PANTHER" id="PTHR12534:SF0">
    <property type="entry name" value="SMALL RIBOSOMAL SUBUNIT PROTEIN US2M"/>
    <property type="match status" value="1"/>
</dbReference>
<dbReference type="Pfam" id="PF00318">
    <property type="entry name" value="Ribosomal_S2"/>
    <property type="match status" value="1"/>
</dbReference>
<dbReference type="PRINTS" id="PR00395">
    <property type="entry name" value="RIBOSOMALS2"/>
</dbReference>
<dbReference type="SUPFAM" id="SSF52313">
    <property type="entry name" value="Ribosomal protein S2"/>
    <property type="match status" value="1"/>
</dbReference>
<dbReference type="PROSITE" id="PS00962">
    <property type="entry name" value="RIBOSOMAL_S2_1"/>
    <property type="match status" value="1"/>
</dbReference>
<dbReference type="PROSITE" id="PS00963">
    <property type="entry name" value="RIBOSOMAL_S2_2"/>
    <property type="match status" value="1"/>
</dbReference>
<accession>Q02AL1</accession>